<name>ENO_MYCAP</name>
<gene>
    <name evidence="1" type="primary">eno</name>
    <name type="ordered locus">MAG3190</name>
</gene>
<keyword id="KW-0963">Cytoplasm</keyword>
<keyword id="KW-0324">Glycolysis</keyword>
<keyword id="KW-0456">Lyase</keyword>
<keyword id="KW-0460">Magnesium</keyword>
<keyword id="KW-0479">Metal-binding</keyword>
<keyword id="KW-1185">Reference proteome</keyword>
<keyword id="KW-0964">Secreted</keyword>
<evidence type="ECO:0000255" key="1">
    <source>
        <dbReference type="HAMAP-Rule" id="MF_00318"/>
    </source>
</evidence>
<sequence length="454" mass="49570">MPIIERILAREILDSRGNPTIQVEVTTDYGTTGVANVPSGASTGSREALELRDKGTKYENNWFGGKGVMTAVDNVNEIIALELEGLSVFNQREIDKIMIDLDGTATKSKLGANAILGVSLAVAKAAAAELEMPLYRYIGGANAHVLPLPMLNVLNGGEHASNTVDFQEFMIMPVGSKSLRQALQMANKVFHNLAKLLKKAGYGTQVGDEGGFAPNCKSHEEVLDYLVEAIKIAGYTPATKGKNAIAIALDAACSELYDEKTKKYTFKKLKQAISEKRPGFEHLGDVKLEYTSDELIEYFGKLIDKYPIISIEDGLAESDWEGFAKMTAKYGHKVQIVGDDLTVTNPKLLEKAIEQKSMNAILIKLNQIGTLSETMDAINKAQKANMACVVSHRSGETEDTTIADLAVAFNTGQIKTGSMSRTDRIAKYNRLLVIEEELGEQSEFEGIKAFYNIK</sequence>
<accession>A5IYA8</accession>
<organism>
    <name type="scientific">Mycoplasmopsis agalactiae (strain NCTC 10123 / CIP 59.7 / PG2)</name>
    <name type="common">Mycoplasma agalactiae</name>
    <dbReference type="NCBI Taxonomy" id="347257"/>
    <lineage>
        <taxon>Bacteria</taxon>
        <taxon>Bacillati</taxon>
        <taxon>Mycoplasmatota</taxon>
        <taxon>Mycoplasmoidales</taxon>
        <taxon>Metamycoplasmataceae</taxon>
        <taxon>Mycoplasmopsis</taxon>
    </lineage>
</organism>
<dbReference type="EC" id="4.2.1.11" evidence="1"/>
<dbReference type="EMBL" id="CU179680">
    <property type="protein sequence ID" value="CAL59017.1"/>
    <property type="molecule type" value="Genomic_DNA"/>
</dbReference>
<dbReference type="RefSeq" id="WP_011949494.1">
    <property type="nucleotide sequence ID" value="NC_009497.1"/>
</dbReference>
<dbReference type="SMR" id="A5IYA8"/>
<dbReference type="STRING" id="347257.MAG3190"/>
<dbReference type="GeneID" id="93358082"/>
<dbReference type="KEGG" id="maa:MAG3190"/>
<dbReference type="HOGENOM" id="CLU_031223_2_1_14"/>
<dbReference type="UniPathway" id="UPA00109">
    <property type="reaction ID" value="UER00187"/>
</dbReference>
<dbReference type="Proteomes" id="UP000007065">
    <property type="component" value="Chromosome"/>
</dbReference>
<dbReference type="GO" id="GO:0009986">
    <property type="term" value="C:cell surface"/>
    <property type="evidence" value="ECO:0007669"/>
    <property type="project" value="UniProtKB-SubCell"/>
</dbReference>
<dbReference type="GO" id="GO:0005576">
    <property type="term" value="C:extracellular region"/>
    <property type="evidence" value="ECO:0007669"/>
    <property type="project" value="UniProtKB-SubCell"/>
</dbReference>
<dbReference type="GO" id="GO:0000015">
    <property type="term" value="C:phosphopyruvate hydratase complex"/>
    <property type="evidence" value="ECO:0007669"/>
    <property type="project" value="InterPro"/>
</dbReference>
<dbReference type="GO" id="GO:0000287">
    <property type="term" value="F:magnesium ion binding"/>
    <property type="evidence" value="ECO:0007669"/>
    <property type="project" value="UniProtKB-UniRule"/>
</dbReference>
<dbReference type="GO" id="GO:0004634">
    <property type="term" value="F:phosphopyruvate hydratase activity"/>
    <property type="evidence" value="ECO:0007669"/>
    <property type="project" value="UniProtKB-UniRule"/>
</dbReference>
<dbReference type="GO" id="GO:0006096">
    <property type="term" value="P:glycolytic process"/>
    <property type="evidence" value="ECO:0007669"/>
    <property type="project" value="UniProtKB-UniRule"/>
</dbReference>
<dbReference type="CDD" id="cd03313">
    <property type="entry name" value="enolase"/>
    <property type="match status" value="1"/>
</dbReference>
<dbReference type="FunFam" id="3.30.390.10:FF:000001">
    <property type="entry name" value="Enolase"/>
    <property type="match status" value="1"/>
</dbReference>
<dbReference type="Gene3D" id="3.20.20.120">
    <property type="entry name" value="Enolase-like C-terminal domain"/>
    <property type="match status" value="1"/>
</dbReference>
<dbReference type="Gene3D" id="3.30.390.10">
    <property type="entry name" value="Enolase-like, N-terminal domain"/>
    <property type="match status" value="1"/>
</dbReference>
<dbReference type="HAMAP" id="MF_00318">
    <property type="entry name" value="Enolase"/>
    <property type="match status" value="1"/>
</dbReference>
<dbReference type="InterPro" id="IPR000941">
    <property type="entry name" value="Enolase"/>
</dbReference>
<dbReference type="InterPro" id="IPR036849">
    <property type="entry name" value="Enolase-like_C_sf"/>
</dbReference>
<dbReference type="InterPro" id="IPR029017">
    <property type="entry name" value="Enolase-like_N"/>
</dbReference>
<dbReference type="InterPro" id="IPR020810">
    <property type="entry name" value="Enolase_C"/>
</dbReference>
<dbReference type="InterPro" id="IPR020809">
    <property type="entry name" value="Enolase_CS"/>
</dbReference>
<dbReference type="InterPro" id="IPR020811">
    <property type="entry name" value="Enolase_N"/>
</dbReference>
<dbReference type="NCBIfam" id="TIGR01060">
    <property type="entry name" value="eno"/>
    <property type="match status" value="1"/>
</dbReference>
<dbReference type="PANTHER" id="PTHR11902">
    <property type="entry name" value="ENOLASE"/>
    <property type="match status" value="1"/>
</dbReference>
<dbReference type="PANTHER" id="PTHR11902:SF1">
    <property type="entry name" value="ENOLASE"/>
    <property type="match status" value="1"/>
</dbReference>
<dbReference type="Pfam" id="PF00113">
    <property type="entry name" value="Enolase_C"/>
    <property type="match status" value="1"/>
</dbReference>
<dbReference type="Pfam" id="PF03952">
    <property type="entry name" value="Enolase_N"/>
    <property type="match status" value="1"/>
</dbReference>
<dbReference type="PIRSF" id="PIRSF001400">
    <property type="entry name" value="Enolase"/>
    <property type="match status" value="1"/>
</dbReference>
<dbReference type="PRINTS" id="PR00148">
    <property type="entry name" value="ENOLASE"/>
</dbReference>
<dbReference type="SFLD" id="SFLDF00002">
    <property type="entry name" value="enolase"/>
    <property type="match status" value="1"/>
</dbReference>
<dbReference type="SFLD" id="SFLDG00178">
    <property type="entry name" value="enolase"/>
    <property type="match status" value="1"/>
</dbReference>
<dbReference type="SMART" id="SM01192">
    <property type="entry name" value="Enolase_C"/>
    <property type="match status" value="1"/>
</dbReference>
<dbReference type="SMART" id="SM01193">
    <property type="entry name" value="Enolase_N"/>
    <property type="match status" value="1"/>
</dbReference>
<dbReference type="SUPFAM" id="SSF51604">
    <property type="entry name" value="Enolase C-terminal domain-like"/>
    <property type="match status" value="1"/>
</dbReference>
<dbReference type="SUPFAM" id="SSF54826">
    <property type="entry name" value="Enolase N-terminal domain-like"/>
    <property type="match status" value="1"/>
</dbReference>
<dbReference type="PROSITE" id="PS00164">
    <property type="entry name" value="ENOLASE"/>
    <property type="match status" value="1"/>
</dbReference>
<feature type="chain" id="PRO_1000115888" description="Enolase">
    <location>
        <begin position="1"/>
        <end position="454"/>
    </location>
</feature>
<feature type="active site" description="Proton donor" evidence="1">
    <location>
        <position position="209"/>
    </location>
</feature>
<feature type="active site" description="Proton acceptor" evidence="1">
    <location>
        <position position="364"/>
    </location>
</feature>
<feature type="binding site" evidence="1">
    <location>
        <position position="167"/>
    </location>
    <ligand>
        <name>(2R)-2-phosphoglycerate</name>
        <dbReference type="ChEBI" id="CHEBI:58289"/>
    </ligand>
</feature>
<feature type="binding site" evidence="1">
    <location>
        <position position="250"/>
    </location>
    <ligand>
        <name>Mg(2+)</name>
        <dbReference type="ChEBI" id="CHEBI:18420"/>
    </ligand>
</feature>
<feature type="binding site" evidence="1">
    <location>
        <position position="312"/>
    </location>
    <ligand>
        <name>Mg(2+)</name>
        <dbReference type="ChEBI" id="CHEBI:18420"/>
    </ligand>
</feature>
<feature type="binding site" evidence="1">
    <location>
        <position position="339"/>
    </location>
    <ligand>
        <name>Mg(2+)</name>
        <dbReference type="ChEBI" id="CHEBI:18420"/>
    </ligand>
</feature>
<feature type="binding site" evidence="1">
    <location>
        <position position="364"/>
    </location>
    <ligand>
        <name>(2R)-2-phosphoglycerate</name>
        <dbReference type="ChEBI" id="CHEBI:58289"/>
    </ligand>
</feature>
<feature type="binding site" evidence="1">
    <location>
        <position position="393"/>
    </location>
    <ligand>
        <name>(2R)-2-phosphoglycerate</name>
        <dbReference type="ChEBI" id="CHEBI:58289"/>
    </ligand>
</feature>
<feature type="binding site" evidence="1">
    <location>
        <position position="394"/>
    </location>
    <ligand>
        <name>(2R)-2-phosphoglycerate</name>
        <dbReference type="ChEBI" id="CHEBI:58289"/>
    </ligand>
</feature>
<feature type="binding site" evidence="1">
    <location>
        <position position="415"/>
    </location>
    <ligand>
        <name>(2R)-2-phosphoglycerate</name>
        <dbReference type="ChEBI" id="CHEBI:58289"/>
    </ligand>
</feature>
<reference key="1">
    <citation type="journal article" date="2007" name="PLoS Genet.">
        <title>Being pathogenic, plastic, and sexual while living with a nearly minimal bacterial genome.</title>
        <authorList>
            <person name="Sirand-Pugnet P."/>
            <person name="Lartigue C."/>
            <person name="Marenda M."/>
            <person name="Jacob D."/>
            <person name="Barre A."/>
            <person name="Barbe V."/>
            <person name="Schenowitz C."/>
            <person name="Mangenot S."/>
            <person name="Couloux A."/>
            <person name="Segurens B."/>
            <person name="de Daruvar A."/>
            <person name="Blanchard A."/>
            <person name="Citti C."/>
        </authorList>
    </citation>
    <scope>NUCLEOTIDE SEQUENCE [LARGE SCALE GENOMIC DNA]</scope>
    <source>
        <strain>NCTC 10123 / CIP 59.7 / PG2</strain>
    </source>
</reference>
<proteinExistence type="inferred from homology"/>
<protein>
    <recommendedName>
        <fullName evidence="1">Enolase</fullName>
        <ecNumber evidence="1">4.2.1.11</ecNumber>
    </recommendedName>
    <alternativeName>
        <fullName evidence="1">2-phospho-D-glycerate hydro-lyase</fullName>
    </alternativeName>
    <alternativeName>
        <fullName evidence="1">2-phosphoglycerate dehydratase</fullName>
    </alternativeName>
</protein>
<comment type="function">
    <text evidence="1">Catalyzes the reversible conversion of 2-phosphoglycerate (2-PG) into phosphoenolpyruvate (PEP). It is essential for the degradation of carbohydrates via glycolysis.</text>
</comment>
<comment type="catalytic activity">
    <reaction evidence="1">
        <text>(2R)-2-phosphoglycerate = phosphoenolpyruvate + H2O</text>
        <dbReference type="Rhea" id="RHEA:10164"/>
        <dbReference type="ChEBI" id="CHEBI:15377"/>
        <dbReference type="ChEBI" id="CHEBI:58289"/>
        <dbReference type="ChEBI" id="CHEBI:58702"/>
        <dbReference type="EC" id="4.2.1.11"/>
    </reaction>
</comment>
<comment type="cofactor">
    <cofactor evidence="1">
        <name>Mg(2+)</name>
        <dbReference type="ChEBI" id="CHEBI:18420"/>
    </cofactor>
    <text evidence="1">Binds a second Mg(2+) ion via substrate during catalysis.</text>
</comment>
<comment type="pathway">
    <text evidence="1">Carbohydrate degradation; glycolysis; pyruvate from D-glyceraldehyde 3-phosphate: step 4/5.</text>
</comment>
<comment type="subcellular location">
    <subcellularLocation>
        <location evidence="1">Cytoplasm</location>
    </subcellularLocation>
    <subcellularLocation>
        <location evidence="1">Secreted</location>
    </subcellularLocation>
    <subcellularLocation>
        <location evidence="1">Cell surface</location>
    </subcellularLocation>
    <text evidence="1">Fractions of enolase are present in both the cytoplasm and on the cell surface.</text>
</comment>
<comment type="similarity">
    <text evidence="1">Belongs to the enolase family.</text>
</comment>